<gene>
    <name type="primary">PSY2</name>
</gene>
<sequence length="310" mass="35224">DPDIVLPGNLGLLSEAYDRCGEVCAEYAKTFYLGTMLMTPDRRRAIWAIYVWCRRTDELVDGPNASHITPQALDRWEARLEDIFNGRPFDMLDAALSDTVSRFPVDIQPFRDMVEGMRMDLWKSRYNNFDELYLYCYYVAGTVGLMSVPIMGIAPESKATTESVYNAALALGIANQLTNILRDVGEDARRGRVYLPQDELAQAGLSDEDIFAGKVTDKWRIFMKKQIQRARKFFDEAEKGVTELSSASRWPVLASLLLYRKILDEIEANDYNNFTRRAYVSKPKKLLTLPIAYARSLVPPKSTSCPLAKT</sequence>
<organism>
    <name type="scientific">Solanum lycopersicum</name>
    <name type="common">Tomato</name>
    <name type="synonym">Lycopersicon esculentum</name>
    <dbReference type="NCBI Taxonomy" id="4081"/>
    <lineage>
        <taxon>Eukaryota</taxon>
        <taxon>Viridiplantae</taxon>
        <taxon>Streptophyta</taxon>
        <taxon>Embryophyta</taxon>
        <taxon>Tracheophyta</taxon>
        <taxon>Spermatophyta</taxon>
        <taxon>Magnoliopsida</taxon>
        <taxon>eudicotyledons</taxon>
        <taxon>Gunneridae</taxon>
        <taxon>Pentapetalae</taxon>
        <taxon>asterids</taxon>
        <taxon>lamiids</taxon>
        <taxon>Solanales</taxon>
        <taxon>Solanaceae</taxon>
        <taxon>Solanoideae</taxon>
        <taxon>Solaneae</taxon>
        <taxon>Solanum</taxon>
        <taxon>Solanum subgen. Lycopersicon</taxon>
    </lineage>
</organism>
<feature type="transit peptide" description="Chloroplast" evidence="2">
    <location>
        <begin position="1" status="less than"/>
        <end position="25"/>
    </location>
</feature>
<feature type="chain" id="PRO_0000029857" description="Phytoene synthase 2, chloroplastic">
    <location>
        <begin position="26"/>
        <end position="310"/>
    </location>
</feature>
<feature type="non-terminal residue">
    <location>
        <position position="1"/>
    </location>
</feature>
<protein>
    <recommendedName>
        <fullName>Phytoene synthase 2, chloroplastic</fullName>
        <ecNumber>2.5.1.32</ecNumber>
    </recommendedName>
</protein>
<evidence type="ECO:0000250" key="1"/>
<evidence type="ECO:0000255" key="2"/>
<evidence type="ECO:0000305" key="3"/>
<comment type="function">
    <text>Catalyzes the reaction from prephytoene diphosphate to phytoene.</text>
</comment>
<comment type="catalytic activity">
    <reaction>
        <text>2 (2E,6E,10E)-geranylgeranyl diphosphate = 15-cis-phytoene + 2 diphosphate</text>
        <dbReference type="Rhea" id="RHEA:34475"/>
        <dbReference type="ChEBI" id="CHEBI:27787"/>
        <dbReference type="ChEBI" id="CHEBI:33019"/>
        <dbReference type="ChEBI" id="CHEBI:58756"/>
        <dbReference type="EC" id="2.5.1.32"/>
    </reaction>
</comment>
<comment type="pathway">
    <text>Carotenoid biosynthesis; phytoene biosynthesis; all-trans-phytoene from geranylgeranyl diphosphate: step 1/1.</text>
</comment>
<comment type="subunit">
    <text evidence="1">Monomer.</text>
</comment>
<comment type="subcellular location">
    <subcellularLocation>
        <location>Plastid</location>
        <location>Chloroplast</location>
    </subcellularLocation>
</comment>
<comment type="developmental stage">
    <text>In mature leaves.</text>
</comment>
<comment type="similarity">
    <text evidence="3">Belongs to the phytoene/squalene synthase family.</text>
</comment>
<accession>P37273</accession>
<keyword id="KW-0125">Carotenoid biosynthesis</keyword>
<keyword id="KW-0150">Chloroplast</keyword>
<keyword id="KW-0414">Isoprene biosynthesis</keyword>
<keyword id="KW-0934">Plastid</keyword>
<keyword id="KW-1185">Reference proteome</keyword>
<keyword id="KW-0808">Transferase</keyword>
<keyword id="KW-0809">Transit peptide</keyword>
<dbReference type="EC" id="2.5.1.32"/>
<dbReference type="EMBL" id="L23424">
    <property type="protein sequence ID" value="AAA34187.1"/>
    <property type="molecule type" value="mRNA"/>
</dbReference>
<dbReference type="PIR" id="A49558">
    <property type="entry name" value="A49558"/>
</dbReference>
<dbReference type="SMR" id="P37273"/>
<dbReference type="FunCoup" id="P37273">
    <property type="interactions" value="249"/>
</dbReference>
<dbReference type="STRING" id="4081.P37273"/>
<dbReference type="PaxDb" id="4081-Solyc02g081330.2.1"/>
<dbReference type="eggNOG" id="KOG1459">
    <property type="taxonomic scope" value="Eukaryota"/>
</dbReference>
<dbReference type="InParanoid" id="P37273"/>
<dbReference type="SABIO-RK" id="P37273"/>
<dbReference type="UniPathway" id="UPA00799">
    <property type="reaction ID" value="UER00773"/>
</dbReference>
<dbReference type="Proteomes" id="UP000004994">
    <property type="component" value="Unplaced"/>
</dbReference>
<dbReference type="ExpressionAtlas" id="P37273">
    <property type="expression patterns" value="baseline and differential"/>
</dbReference>
<dbReference type="GO" id="GO:0009507">
    <property type="term" value="C:chloroplast"/>
    <property type="evidence" value="ECO:0007669"/>
    <property type="project" value="UniProtKB-SubCell"/>
</dbReference>
<dbReference type="GO" id="GO:0046905">
    <property type="term" value="F:15-cis-phytoene synthase activity"/>
    <property type="evidence" value="ECO:0000318"/>
    <property type="project" value="GO_Central"/>
</dbReference>
<dbReference type="GO" id="GO:0004311">
    <property type="term" value="F:geranylgeranyl diphosphate synthase activity"/>
    <property type="evidence" value="ECO:0007669"/>
    <property type="project" value="InterPro"/>
</dbReference>
<dbReference type="GO" id="GO:0051996">
    <property type="term" value="F:squalene synthase [NAD(P)H] activity"/>
    <property type="evidence" value="ECO:0007669"/>
    <property type="project" value="InterPro"/>
</dbReference>
<dbReference type="GO" id="GO:0016117">
    <property type="term" value="P:carotenoid biosynthetic process"/>
    <property type="evidence" value="ECO:0000318"/>
    <property type="project" value="GO_Central"/>
</dbReference>
<dbReference type="CDD" id="cd00683">
    <property type="entry name" value="Trans_IPPS_HH"/>
    <property type="match status" value="1"/>
</dbReference>
<dbReference type="FunFam" id="1.10.600.10:FF:000004">
    <property type="entry name" value="Phytoene synthase chloroplastic"/>
    <property type="match status" value="1"/>
</dbReference>
<dbReference type="Gene3D" id="1.10.600.10">
    <property type="entry name" value="Farnesyl Diphosphate Synthase"/>
    <property type="match status" value="1"/>
</dbReference>
<dbReference type="InterPro" id="IPR008949">
    <property type="entry name" value="Isoprenoid_synthase_dom_sf"/>
</dbReference>
<dbReference type="InterPro" id="IPR002060">
    <property type="entry name" value="Squ/phyt_synthse"/>
</dbReference>
<dbReference type="InterPro" id="IPR019845">
    <property type="entry name" value="Squalene/phytoene_synthase_CS"/>
</dbReference>
<dbReference type="InterPro" id="IPR044843">
    <property type="entry name" value="Trans_IPPS_bact-type"/>
</dbReference>
<dbReference type="InterPro" id="IPR033904">
    <property type="entry name" value="Trans_IPPS_HH"/>
</dbReference>
<dbReference type="PANTHER" id="PTHR31480">
    <property type="entry name" value="BIFUNCTIONAL LYCOPENE CYCLASE/PHYTOENE SYNTHASE"/>
    <property type="match status" value="1"/>
</dbReference>
<dbReference type="Pfam" id="PF00494">
    <property type="entry name" value="SQS_PSY"/>
    <property type="match status" value="1"/>
</dbReference>
<dbReference type="SFLD" id="SFLDG01212">
    <property type="entry name" value="Phytoene_synthase_like"/>
    <property type="match status" value="1"/>
</dbReference>
<dbReference type="SFLD" id="SFLDG01018">
    <property type="entry name" value="Squalene/Phytoene_Synthase_Lik"/>
    <property type="match status" value="1"/>
</dbReference>
<dbReference type="SUPFAM" id="SSF48576">
    <property type="entry name" value="Terpenoid synthases"/>
    <property type="match status" value="1"/>
</dbReference>
<dbReference type="PROSITE" id="PS01044">
    <property type="entry name" value="SQUALEN_PHYTOEN_SYN_1"/>
    <property type="match status" value="1"/>
</dbReference>
<dbReference type="PROSITE" id="PS01045">
    <property type="entry name" value="SQUALEN_PHYTOEN_SYN_2"/>
    <property type="match status" value="1"/>
</dbReference>
<proteinExistence type="evidence at transcript level"/>
<name>PSY2_SOLLC</name>
<reference key="1">
    <citation type="journal article" date="1993" name="J. Biol. Chem.">
        <title>cDNA cloning, expression during development, and genome mapping of PSY2, a second tomato gene encoding phytoene synthase.</title>
        <authorList>
            <person name="Bartley G.E."/>
            <person name="Scolnik P.A."/>
        </authorList>
    </citation>
    <scope>NUCLEOTIDE SEQUENCE [MRNA]</scope>
    <source>
        <tissue>Leaf</tissue>
    </source>
</reference>